<keyword id="KW-0040">ANK repeat</keyword>
<keyword id="KW-0677">Repeat</keyword>
<dbReference type="EMBL" id="CP000087">
    <property type="protein sequence ID" value="ABE05106.1"/>
    <property type="molecule type" value="Genomic_DNA"/>
</dbReference>
<dbReference type="RefSeq" id="WP_011477684.1">
    <property type="nucleotide sequence ID" value="NC_007940.1"/>
</dbReference>
<dbReference type="SMR" id="Q1RHQ8"/>
<dbReference type="KEGG" id="rbe:RBE_1025"/>
<dbReference type="eggNOG" id="COG0666">
    <property type="taxonomic scope" value="Bacteria"/>
</dbReference>
<dbReference type="HOGENOM" id="CLU_1229104_0_0_5"/>
<dbReference type="OrthoDB" id="928522at2"/>
<dbReference type="Proteomes" id="UP000001951">
    <property type="component" value="Chromosome"/>
</dbReference>
<dbReference type="Gene3D" id="1.25.40.20">
    <property type="entry name" value="Ankyrin repeat-containing domain"/>
    <property type="match status" value="2"/>
</dbReference>
<dbReference type="InterPro" id="IPR002110">
    <property type="entry name" value="Ankyrin_rpt"/>
</dbReference>
<dbReference type="InterPro" id="IPR036770">
    <property type="entry name" value="Ankyrin_rpt-contain_sf"/>
</dbReference>
<dbReference type="PANTHER" id="PTHR24198">
    <property type="entry name" value="ANKYRIN REPEAT AND PROTEIN KINASE DOMAIN-CONTAINING PROTEIN"/>
    <property type="match status" value="1"/>
</dbReference>
<dbReference type="PANTHER" id="PTHR24198:SF165">
    <property type="entry name" value="ANKYRIN REPEAT-CONTAINING PROTEIN-RELATED"/>
    <property type="match status" value="1"/>
</dbReference>
<dbReference type="Pfam" id="PF12796">
    <property type="entry name" value="Ank_2"/>
    <property type="match status" value="2"/>
</dbReference>
<dbReference type="SMART" id="SM00248">
    <property type="entry name" value="ANK"/>
    <property type="match status" value="3"/>
</dbReference>
<dbReference type="SUPFAM" id="SSF48403">
    <property type="entry name" value="Ankyrin repeat"/>
    <property type="match status" value="1"/>
</dbReference>
<dbReference type="PROSITE" id="PS50297">
    <property type="entry name" value="ANK_REP_REGION"/>
    <property type="match status" value="1"/>
</dbReference>
<dbReference type="PROSITE" id="PS50088">
    <property type="entry name" value="ANK_REPEAT"/>
    <property type="match status" value="1"/>
</dbReference>
<feature type="chain" id="PRO_0000280922" description="Putative ankyrin repeat protein RBE_1025">
    <location>
        <begin position="1"/>
        <end position="225"/>
    </location>
</feature>
<feature type="repeat" description="ANK 1">
    <location>
        <begin position="6"/>
        <end position="35"/>
    </location>
</feature>
<feature type="repeat" description="ANK 2">
    <location>
        <begin position="41"/>
        <end position="71"/>
    </location>
</feature>
<feature type="repeat" description="ANK 3">
    <location>
        <begin position="75"/>
        <end position="120"/>
    </location>
</feature>
<feature type="repeat" description="ANK 4">
    <location>
        <begin position="124"/>
        <end position="153"/>
    </location>
</feature>
<organism>
    <name type="scientific">Rickettsia bellii (strain RML369-C)</name>
    <dbReference type="NCBI Taxonomy" id="336407"/>
    <lineage>
        <taxon>Bacteria</taxon>
        <taxon>Pseudomonadati</taxon>
        <taxon>Pseudomonadota</taxon>
        <taxon>Alphaproteobacteria</taxon>
        <taxon>Rickettsiales</taxon>
        <taxon>Rickettsiaceae</taxon>
        <taxon>Rickettsieae</taxon>
        <taxon>Rickettsia</taxon>
        <taxon>belli group</taxon>
    </lineage>
</organism>
<reference key="1">
    <citation type="journal article" date="2006" name="PLoS Genet.">
        <title>Genome sequence of Rickettsia bellii illuminates the role of amoebae in gene exchanges between intracellular pathogens.</title>
        <authorList>
            <person name="Ogata H."/>
            <person name="La Scola B."/>
            <person name="Audic S."/>
            <person name="Renesto P."/>
            <person name="Blanc G."/>
            <person name="Robert C."/>
            <person name="Fournier P.-E."/>
            <person name="Claverie J.-M."/>
            <person name="Raoult D."/>
        </authorList>
    </citation>
    <scope>NUCLEOTIDE SEQUENCE [LARGE SCALE GENOMIC DNA]</scope>
    <source>
        <strain>RML369-C</strain>
    </source>
</reference>
<name>Y1025_RICBR</name>
<protein>
    <recommendedName>
        <fullName>Putative ankyrin repeat protein RBE_1025</fullName>
    </recommendedName>
</protein>
<gene>
    <name type="ordered locus">RBE_1025</name>
</gene>
<proteinExistence type="predicted"/>
<accession>Q1RHQ8</accession>
<sequence length="225" mass="25722">MFDDKLSKDLLLSARANNNLAVIRILQDTTSAINPNLQDENGKTALHWAVINLNPLITCYILKIEKVNVNIQDNTGFTVLHYLAKTISNLKFTTINGSFYKSNNYSILKTLFEYGIDVNIQDNKGNTALHYAICKNNFFFIEELLSNNASPFILNKAGFSILYKLNTKNCNFKDEIIESLHSKYPESIELGLVDNKIIIYDIHKLLYNLPYFMYEHNILILGNDA</sequence>